<accession>A1T3D2</accession>
<gene>
    <name evidence="1" type="primary">hemA</name>
    <name type="ordered locus">Mvan_0844</name>
</gene>
<name>HEM1_MYCVP</name>
<proteinExistence type="inferred from homology"/>
<dbReference type="EC" id="1.2.1.70" evidence="1"/>
<dbReference type="EMBL" id="CP000511">
    <property type="protein sequence ID" value="ABM11682.1"/>
    <property type="molecule type" value="Genomic_DNA"/>
</dbReference>
<dbReference type="RefSeq" id="WP_011778117.1">
    <property type="nucleotide sequence ID" value="NC_008726.1"/>
</dbReference>
<dbReference type="SMR" id="A1T3D2"/>
<dbReference type="STRING" id="350058.Mvan_0844"/>
<dbReference type="KEGG" id="mva:Mvan_0844"/>
<dbReference type="eggNOG" id="COG0373">
    <property type="taxonomic scope" value="Bacteria"/>
</dbReference>
<dbReference type="HOGENOM" id="CLU_035113_4_0_11"/>
<dbReference type="UniPathway" id="UPA00251">
    <property type="reaction ID" value="UER00316"/>
</dbReference>
<dbReference type="Proteomes" id="UP000009159">
    <property type="component" value="Chromosome"/>
</dbReference>
<dbReference type="GO" id="GO:0008883">
    <property type="term" value="F:glutamyl-tRNA reductase activity"/>
    <property type="evidence" value="ECO:0007669"/>
    <property type="project" value="UniProtKB-UniRule"/>
</dbReference>
<dbReference type="GO" id="GO:0050661">
    <property type="term" value="F:NADP binding"/>
    <property type="evidence" value="ECO:0007669"/>
    <property type="project" value="InterPro"/>
</dbReference>
<dbReference type="GO" id="GO:0019353">
    <property type="term" value="P:protoporphyrinogen IX biosynthetic process from glutamate"/>
    <property type="evidence" value="ECO:0007669"/>
    <property type="project" value="TreeGrafter"/>
</dbReference>
<dbReference type="CDD" id="cd05213">
    <property type="entry name" value="NAD_bind_Glutamyl_tRNA_reduct"/>
    <property type="match status" value="1"/>
</dbReference>
<dbReference type="FunFam" id="3.30.460.30:FF:000001">
    <property type="entry name" value="Glutamyl-tRNA reductase"/>
    <property type="match status" value="1"/>
</dbReference>
<dbReference type="Gene3D" id="3.30.460.30">
    <property type="entry name" value="Glutamyl-tRNA reductase, N-terminal domain"/>
    <property type="match status" value="1"/>
</dbReference>
<dbReference type="Gene3D" id="3.40.50.720">
    <property type="entry name" value="NAD(P)-binding Rossmann-like Domain"/>
    <property type="match status" value="1"/>
</dbReference>
<dbReference type="HAMAP" id="MF_00087">
    <property type="entry name" value="Glu_tRNA_reductase"/>
    <property type="match status" value="1"/>
</dbReference>
<dbReference type="InterPro" id="IPR000343">
    <property type="entry name" value="4pyrrol_synth_GluRdtase"/>
</dbReference>
<dbReference type="InterPro" id="IPR015896">
    <property type="entry name" value="4pyrrol_synth_GluRdtase_dimer"/>
</dbReference>
<dbReference type="InterPro" id="IPR015895">
    <property type="entry name" value="4pyrrol_synth_GluRdtase_N"/>
</dbReference>
<dbReference type="InterPro" id="IPR018214">
    <property type="entry name" value="GluRdtase_CS"/>
</dbReference>
<dbReference type="InterPro" id="IPR036453">
    <property type="entry name" value="GluRdtase_dimer_dom_sf"/>
</dbReference>
<dbReference type="InterPro" id="IPR036343">
    <property type="entry name" value="GluRdtase_N_sf"/>
</dbReference>
<dbReference type="InterPro" id="IPR036291">
    <property type="entry name" value="NAD(P)-bd_dom_sf"/>
</dbReference>
<dbReference type="InterPro" id="IPR006151">
    <property type="entry name" value="Shikm_DH/Glu-tRNA_Rdtase"/>
</dbReference>
<dbReference type="NCBIfam" id="TIGR01035">
    <property type="entry name" value="hemA"/>
    <property type="match status" value="1"/>
</dbReference>
<dbReference type="NCBIfam" id="NF000744">
    <property type="entry name" value="PRK00045.1-3"/>
    <property type="match status" value="1"/>
</dbReference>
<dbReference type="PANTHER" id="PTHR43013">
    <property type="entry name" value="GLUTAMYL-TRNA REDUCTASE"/>
    <property type="match status" value="1"/>
</dbReference>
<dbReference type="PANTHER" id="PTHR43013:SF1">
    <property type="entry name" value="GLUTAMYL-TRNA REDUCTASE"/>
    <property type="match status" value="1"/>
</dbReference>
<dbReference type="Pfam" id="PF00745">
    <property type="entry name" value="GlutR_dimer"/>
    <property type="match status" value="1"/>
</dbReference>
<dbReference type="Pfam" id="PF05201">
    <property type="entry name" value="GlutR_N"/>
    <property type="match status" value="1"/>
</dbReference>
<dbReference type="Pfam" id="PF01488">
    <property type="entry name" value="Shikimate_DH"/>
    <property type="match status" value="1"/>
</dbReference>
<dbReference type="PIRSF" id="PIRSF000445">
    <property type="entry name" value="4pyrrol_synth_GluRdtase"/>
    <property type="match status" value="1"/>
</dbReference>
<dbReference type="SUPFAM" id="SSF69742">
    <property type="entry name" value="Glutamyl tRNA-reductase catalytic, N-terminal domain"/>
    <property type="match status" value="1"/>
</dbReference>
<dbReference type="SUPFAM" id="SSF69075">
    <property type="entry name" value="Glutamyl tRNA-reductase dimerization domain"/>
    <property type="match status" value="1"/>
</dbReference>
<dbReference type="SUPFAM" id="SSF51735">
    <property type="entry name" value="NAD(P)-binding Rossmann-fold domains"/>
    <property type="match status" value="1"/>
</dbReference>
<dbReference type="PROSITE" id="PS00747">
    <property type="entry name" value="GLUTR"/>
    <property type="match status" value="1"/>
</dbReference>
<organism>
    <name type="scientific">Mycolicibacterium vanbaalenii (strain DSM 7251 / JCM 13017 / BCRC 16820 / KCTC 9966 / NRRL B-24157 / PYR-1)</name>
    <name type="common">Mycobacterium vanbaalenii</name>
    <dbReference type="NCBI Taxonomy" id="350058"/>
    <lineage>
        <taxon>Bacteria</taxon>
        <taxon>Bacillati</taxon>
        <taxon>Actinomycetota</taxon>
        <taxon>Actinomycetes</taxon>
        <taxon>Mycobacteriales</taxon>
        <taxon>Mycobacteriaceae</taxon>
        <taxon>Mycolicibacterium</taxon>
    </lineage>
</organism>
<feature type="chain" id="PRO_1000004652" description="Glutamyl-tRNA reductase">
    <location>
        <begin position="1"/>
        <end position="456"/>
    </location>
</feature>
<feature type="active site" description="Nucleophile" evidence="1">
    <location>
        <position position="50"/>
    </location>
</feature>
<feature type="binding site" evidence="1">
    <location>
        <begin position="49"/>
        <end position="52"/>
    </location>
    <ligand>
        <name>substrate</name>
    </ligand>
</feature>
<feature type="binding site" evidence="1">
    <location>
        <position position="109"/>
    </location>
    <ligand>
        <name>substrate</name>
    </ligand>
</feature>
<feature type="binding site" evidence="1">
    <location>
        <begin position="114"/>
        <end position="116"/>
    </location>
    <ligand>
        <name>substrate</name>
    </ligand>
</feature>
<feature type="binding site" evidence="1">
    <location>
        <position position="120"/>
    </location>
    <ligand>
        <name>substrate</name>
    </ligand>
</feature>
<feature type="binding site" evidence="1">
    <location>
        <begin position="189"/>
        <end position="194"/>
    </location>
    <ligand>
        <name>NADP(+)</name>
        <dbReference type="ChEBI" id="CHEBI:58349"/>
    </ligand>
</feature>
<feature type="site" description="Important for activity" evidence="1">
    <location>
        <position position="99"/>
    </location>
</feature>
<comment type="function">
    <text evidence="1">Catalyzes the NADPH-dependent reduction of glutamyl-tRNA(Glu) to glutamate 1-semialdehyde (GSA).</text>
</comment>
<comment type="catalytic activity">
    <reaction evidence="1">
        <text>(S)-4-amino-5-oxopentanoate + tRNA(Glu) + NADP(+) = L-glutamyl-tRNA(Glu) + NADPH + H(+)</text>
        <dbReference type="Rhea" id="RHEA:12344"/>
        <dbReference type="Rhea" id="RHEA-COMP:9663"/>
        <dbReference type="Rhea" id="RHEA-COMP:9680"/>
        <dbReference type="ChEBI" id="CHEBI:15378"/>
        <dbReference type="ChEBI" id="CHEBI:57501"/>
        <dbReference type="ChEBI" id="CHEBI:57783"/>
        <dbReference type="ChEBI" id="CHEBI:58349"/>
        <dbReference type="ChEBI" id="CHEBI:78442"/>
        <dbReference type="ChEBI" id="CHEBI:78520"/>
        <dbReference type="EC" id="1.2.1.70"/>
    </reaction>
</comment>
<comment type="pathway">
    <text evidence="1">Porphyrin-containing compound metabolism; protoporphyrin-IX biosynthesis; 5-aminolevulinate from L-glutamyl-tRNA(Glu): step 1/2.</text>
</comment>
<comment type="subunit">
    <text evidence="1">Homodimer.</text>
</comment>
<comment type="domain">
    <text evidence="1">Possesses an unusual extended V-shaped dimeric structure with each monomer consisting of three distinct domains arranged along a curved 'spinal' alpha-helix. The N-terminal catalytic domain specifically recognizes the glutamate moiety of the substrate. The second domain is the NADPH-binding domain, and the third C-terminal domain is responsible for dimerization.</text>
</comment>
<comment type="miscellaneous">
    <text evidence="1">During catalysis, the active site Cys acts as a nucleophile attacking the alpha-carbonyl group of tRNA-bound glutamate with the formation of a thioester intermediate between enzyme and glutamate, and the concomitant release of tRNA(Glu). The thioester intermediate is finally reduced by direct hydride transfer from NADPH, to form the product GSA.</text>
</comment>
<comment type="similarity">
    <text evidence="1">Belongs to the glutamyl-tRNA reductase family.</text>
</comment>
<evidence type="ECO:0000255" key="1">
    <source>
        <dbReference type="HAMAP-Rule" id="MF_00087"/>
    </source>
</evidence>
<keyword id="KW-0521">NADP</keyword>
<keyword id="KW-0560">Oxidoreductase</keyword>
<keyword id="KW-0627">Porphyrin biosynthesis</keyword>
<protein>
    <recommendedName>
        <fullName evidence="1">Glutamyl-tRNA reductase</fullName>
        <shortName evidence="1">GluTR</shortName>
        <ecNumber evidence="1">1.2.1.70</ecNumber>
    </recommendedName>
</protein>
<reference key="1">
    <citation type="submission" date="2006-12" db="EMBL/GenBank/DDBJ databases">
        <title>Complete sequence of Mycobacterium vanbaalenii PYR-1.</title>
        <authorList>
            <consortium name="US DOE Joint Genome Institute"/>
            <person name="Copeland A."/>
            <person name="Lucas S."/>
            <person name="Lapidus A."/>
            <person name="Barry K."/>
            <person name="Detter J.C."/>
            <person name="Glavina del Rio T."/>
            <person name="Hammon N."/>
            <person name="Israni S."/>
            <person name="Dalin E."/>
            <person name="Tice H."/>
            <person name="Pitluck S."/>
            <person name="Singan V."/>
            <person name="Schmutz J."/>
            <person name="Larimer F."/>
            <person name="Land M."/>
            <person name="Hauser L."/>
            <person name="Kyrpides N."/>
            <person name="Anderson I.J."/>
            <person name="Miller C."/>
            <person name="Richardson P."/>
        </authorList>
    </citation>
    <scope>NUCLEOTIDE SEQUENCE [LARGE SCALE GENOMIC DNA]</scope>
    <source>
        <strain>DSM 7251 / JCM 13017 / BCRC 16820 / KCTC 9966 / NRRL B-24157 / PYR-1</strain>
    </source>
</reference>
<sequence length="456" mass="48085">MSVLLFGVSHRSAPVSVLEQLSVDDSDQAKLIDQVLQSSLVTEAMVLSTCNRVEIYAVVEAFHGGLSVIGQVLSEHSGMSLQDLTKHAYVRYAEAAVEHLFSVAGGLDSAVIGEQQVLGQVRRAYASAEANHTVGRTLHELSQRALAVGKRVHSETGIDAAGASVVSVALDTAEKKVGSLAGRSAVLVGAGSMGALAAKQLMRAGVERIHVVNRTLPRAAKLAENVRSYGITAEAFPFDHLPPLLTDADIVVTCTGAVRPVVSLADVHRGLAHVREPKELVICDLGMPRDVDPAVAGLPGVFVVDMERILREPTARAAATDADAARTIVAAEVAKYLAGQRMAEVTPTVTALRQRAADVVEAELLRLDNRLPGLDAAHRDEVANTVRRVVDKLLHAPTVRVKQLAGAPGGDSYAEALRELFELDQHAVDAVAGTELGPLAGGDELGSLAIDLDMTE</sequence>